<comment type="function">
    <text evidence="1">Specifically methylates the N4 position of cytidine in position 1402 (C1402) of 16S rRNA.</text>
</comment>
<comment type="catalytic activity">
    <reaction evidence="1">
        <text>cytidine(1402) in 16S rRNA + S-adenosyl-L-methionine = N(4)-methylcytidine(1402) in 16S rRNA + S-adenosyl-L-homocysteine + H(+)</text>
        <dbReference type="Rhea" id="RHEA:42928"/>
        <dbReference type="Rhea" id="RHEA-COMP:10286"/>
        <dbReference type="Rhea" id="RHEA-COMP:10287"/>
        <dbReference type="ChEBI" id="CHEBI:15378"/>
        <dbReference type="ChEBI" id="CHEBI:57856"/>
        <dbReference type="ChEBI" id="CHEBI:59789"/>
        <dbReference type="ChEBI" id="CHEBI:74506"/>
        <dbReference type="ChEBI" id="CHEBI:82748"/>
        <dbReference type="EC" id="2.1.1.199"/>
    </reaction>
</comment>
<comment type="subcellular location">
    <subcellularLocation>
        <location evidence="1">Cytoplasm</location>
    </subcellularLocation>
</comment>
<comment type="similarity">
    <text evidence="1">Belongs to the methyltransferase superfamily. RsmH family.</text>
</comment>
<comment type="sequence caution" evidence="2">
    <conflict type="erroneous initiation">
        <sequence resource="EMBL-CDS" id="CAA18676"/>
    </conflict>
    <text>Truncated N-terminus.</text>
</comment>
<protein>
    <recommendedName>
        <fullName evidence="1">Ribosomal RNA small subunit methyltransferase H</fullName>
        <ecNumber evidence="1">2.1.1.199</ecNumber>
    </recommendedName>
    <alternativeName>
        <fullName evidence="1">16S rRNA m(4)C1402 methyltransferase</fullName>
    </alternativeName>
    <alternativeName>
        <fullName evidence="1">rRNA (cytosine-N(4)-)-methyltransferase RsmH</fullName>
    </alternativeName>
</protein>
<accession>O69560</accession>
<evidence type="ECO:0000255" key="1">
    <source>
        <dbReference type="HAMAP-Rule" id="MF_01007"/>
    </source>
</evidence>
<evidence type="ECO:0000305" key="2"/>
<reference key="1">
    <citation type="journal article" date="2001" name="Nature">
        <title>Massive gene decay in the leprosy bacillus.</title>
        <authorList>
            <person name="Cole S.T."/>
            <person name="Eiglmeier K."/>
            <person name="Parkhill J."/>
            <person name="James K.D."/>
            <person name="Thomson N.R."/>
            <person name="Wheeler P.R."/>
            <person name="Honore N."/>
            <person name="Garnier T."/>
            <person name="Churcher C.M."/>
            <person name="Harris D.E."/>
            <person name="Mungall K.L."/>
            <person name="Basham D."/>
            <person name="Brown D."/>
            <person name="Chillingworth T."/>
            <person name="Connor R."/>
            <person name="Davies R.M."/>
            <person name="Devlin K."/>
            <person name="Duthoy S."/>
            <person name="Feltwell T."/>
            <person name="Fraser A."/>
            <person name="Hamlin N."/>
            <person name="Holroyd S."/>
            <person name="Hornsby T."/>
            <person name="Jagels K."/>
            <person name="Lacroix C."/>
            <person name="Maclean J."/>
            <person name="Moule S."/>
            <person name="Murphy L.D."/>
            <person name="Oliver K."/>
            <person name="Quail M.A."/>
            <person name="Rajandream M.A."/>
            <person name="Rutherford K.M."/>
            <person name="Rutter S."/>
            <person name="Seeger K."/>
            <person name="Simon S."/>
            <person name="Simmonds M."/>
            <person name="Skelton J."/>
            <person name="Squares R."/>
            <person name="Squares S."/>
            <person name="Stevens K."/>
            <person name="Taylor K."/>
            <person name="Whitehead S."/>
            <person name="Woodward J.R."/>
            <person name="Barrell B.G."/>
        </authorList>
    </citation>
    <scope>NUCLEOTIDE SEQUENCE [LARGE SCALE GENOMIC DNA]</scope>
    <source>
        <strain>TN</strain>
    </source>
</reference>
<feature type="chain" id="PRO_0000108660" description="Ribosomal RNA small subunit methyltransferase H">
    <location>
        <begin position="1"/>
        <end position="372"/>
    </location>
</feature>
<feature type="binding site" evidence="1">
    <location>
        <begin position="78"/>
        <end position="80"/>
    </location>
    <ligand>
        <name>S-adenosyl-L-methionine</name>
        <dbReference type="ChEBI" id="CHEBI:59789"/>
    </ligand>
</feature>
<feature type="binding site" evidence="1">
    <location>
        <position position="97"/>
    </location>
    <ligand>
        <name>S-adenosyl-L-methionine</name>
        <dbReference type="ChEBI" id="CHEBI:59789"/>
    </ligand>
</feature>
<feature type="binding site" evidence="1">
    <location>
        <position position="124"/>
    </location>
    <ligand>
        <name>S-adenosyl-L-methionine</name>
        <dbReference type="ChEBI" id="CHEBI:59789"/>
    </ligand>
</feature>
<feature type="binding site" evidence="1">
    <location>
        <position position="148"/>
    </location>
    <ligand>
        <name>S-adenosyl-L-methionine</name>
        <dbReference type="ChEBI" id="CHEBI:59789"/>
    </ligand>
</feature>
<feature type="binding site" evidence="1">
    <location>
        <position position="155"/>
    </location>
    <ligand>
        <name>S-adenosyl-L-methionine</name>
        <dbReference type="ChEBI" id="CHEBI:59789"/>
    </ligand>
</feature>
<proteinExistence type="inferred from homology"/>
<organism>
    <name type="scientific">Mycobacterium leprae (strain TN)</name>
    <dbReference type="NCBI Taxonomy" id="272631"/>
    <lineage>
        <taxon>Bacteria</taxon>
        <taxon>Bacillati</taxon>
        <taxon>Actinomycetota</taxon>
        <taxon>Actinomycetes</taxon>
        <taxon>Mycobacteriales</taxon>
        <taxon>Mycobacteriaceae</taxon>
        <taxon>Mycobacterium</taxon>
    </lineage>
</organism>
<name>RSMH_MYCLE</name>
<dbReference type="EC" id="2.1.1.199" evidence="1"/>
<dbReference type="EMBL" id="AL022602">
    <property type="protein sequence ID" value="CAA18676.1"/>
    <property type="status" value="ALT_INIT"/>
    <property type="molecule type" value="Genomic_DNA"/>
</dbReference>
<dbReference type="EMBL" id="AL583920">
    <property type="protein sequence ID" value="CAC31287.1"/>
    <property type="molecule type" value="Genomic_DNA"/>
</dbReference>
<dbReference type="PIR" id="D87022">
    <property type="entry name" value="D87022"/>
</dbReference>
<dbReference type="RefSeq" id="NP_301689.1">
    <property type="nucleotide sequence ID" value="NC_002677.1"/>
</dbReference>
<dbReference type="RefSeq" id="WP_010908013.1">
    <property type="nucleotide sequence ID" value="NC_002677.1"/>
</dbReference>
<dbReference type="SMR" id="O69560"/>
<dbReference type="STRING" id="272631.gene:17574732"/>
<dbReference type="KEGG" id="mle:ML0906"/>
<dbReference type="PATRIC" id="fig|272631.5.peg.1647"/>
<dbReference type="Leproma" id="ML0906"/>
<dbReference type="eggNOG" id="COG0275">
    <property type="taxonomic scope" value="Bacteria"/>
</dbReference>
<dbReference type="HOGENOM" id="CLU_038422_0_0_11"/>
<dbReference type="OrthoDB" id="9806637at2"/>
<dbReference type="Proteomes" id="UP000000806">
    <property type="component" value="Chromosome"/>
</dbReference>
<dbReference type="GO" id="GO:0005737">
    <property type="term" value="C:cytoplasm"/>
    <property type="evidence" value="ECO:0007669"/>
    <property type="project" value="UniProtKB-SubCell"/>
</dbReference>
<dbReference type="GO" id="GO:0071424">
    <property type="term" value="F:rRNA (cytosine-N4-)-methyltransferase activity"/>
    <property type="evidence" value="ECO:0007669"/>
    <property type="project" value="UniProtKB-UniRule"/>
</dbReference>
<dbReference type="GO" id="GO:0070475">
    <property type="term" value="P:rRNA base methylation"/>
    <property type="evidence" value="ECO:0007669"/>
    <property type="project" value="UniProtKB-UniRule"/>
</dbReference>
<dbReference type="FunFam" id="1.10.150.170:FF:000001">
    <property type="entry name" value="Ribosomal RNA small subunit methyltransferase H"/>
    <property type="match status" value="1"/>
</dbReference>
<dbReference type="Gene3D" id="1.10.150.170">
    <property type="entry name" value="Putative methyltransferase TM0872, insert domain"/>
    <property type="match status" value="1"/>
</dbReference>
<dbReference type="Gene3D" id="3.40.50.150">
    <property type="entry name" value="Vaccinia Virus protein VP39"/>
    <property type="match status" value="1"/>
</dbReference>
<dbReference type="HAMAP" id="MF_01007">
    <property type="entry name" value="16SrRNA_methyltr_H"/>
    <property type="match status" value="1"/>
</dbReference>
<dbReference type="InterPro" id="IPR002903">
    <property type="entry name" value="RsmH"/>
</dbReference>
<dbReference type="InterPro" id="IPR023397">
    <property type="entry name" value="SAM-dep_MeTrfase_MraW_recog"/>
</dbReference>
<dbReference type="InterPro" id="IPR029063">
    <property type="entry name" value="SAM-dependent_MTases_sf"/>
</dbReference>
<dbReference type="NCBIfam" id="TIGR00006">
    <property type="entry name" value="16S rRNA (cytosine(1402)-N(4))-methyltransferase RsmH"/>
    <property type="match status" value="1"/>
</dbReference>
<dbReference type="PANTHER" id="PTHR11265:SF0">
    <property type="entry name" value="12S RRNA N4-METHYLCYTIDINE METHYLTRANSFERASE"/>
    <property type="match status" value="1"/>
</dbReference>
<dbReference type="PANTHER" id="PTHR11265">
    <property type="entry name" value="S-ADENOSYL-METHYLTRANSFERASE MRAW"/>
    <property type="match status" value="1"/>
</dbReference>
<dbReference type="Pfam" id="PF01795">
    <property type="entry name" value="Methyltransf_5"/>
    <property type="match status" value="1"/>
</dbReference>
<dbReference type="SUPFAM" id="SSF81799">
    <property type="entry name" value="Putative methyltransferase TM0872, insert domain"/>
    <property type="match status" value="1"/>
</dbReference>
<dbReference type="SUPFAM" id="SSF53335">
    <property type="entry name" value="S-adenosyl-L-methionine-dependent methyltransferases"/>
    <property type="match status" value="1"/>
</dbReference>
<sequence>MPSDRDHDAGIFAFFGAVPRSDRCRQTRGGGEVVDGSSVFGHVPVFAQRCVTLLAPALTRHHADGSNAILVDATLGVGGHAERFLTEFPGLRLIGLDRDPSALDIARTRLMRFADRVTLIHTRYDNLAVALNKFGYAAVESVDGVLFDLGVSSMQLDCAERGFSYAQDVPLDMRMDPWSPVSAADIVNNYDEAALADILRRYGEERFARRIAAHIVRRRAHTPFTSTAELVALLYQAIPAPARRIGGHPAKRTFQALRIAVNDELNSLSNVLPAALDALTVAGRLVVLAYQSLEDRIVKRVFADAVSSRTPAGLPIELPGHGPRFRLLTRGAEHADAAEIECNPRSAAVRLRALQRTQHGVEPQQPTRRGDS</sequence>
<keyword id="KW-0963">Cytoplasm</keyword>
<keyword id="KW-0489">Methyltransferase</keyword>
<keyword id="KW-1185">Reference proteome</keyword>
<keyword id="KW-0698">rRNA processing</keyword>
<keyword id="KW-0949">S-adenosyl-L-methionine</keyword>
<keyword id="KW-0808">Transferase</keyword>
<gene>
    <name evidence="1" type="primary">rsmH</name>
    <name type="synonym">mraW</name>
    <name type="ordered locus">ML0906</name>
    <name type="ORF">MLCB268.10c</name>
</gene>